<dbReference type="EC" id="3.5.2.6" evidence="6 7"/>
<dbReference type="EMBL" id="MN367307">
    <property type="protein sequence ID" value="QGJ84179.1"/>
    <property type="status" value="ALT_INIT"/>
    <property type="molecule type" value="Genomic_DNA"/>
</dbReference>
<dbReference type="EMBL" id="MN367308">
    <property type="protein sequence ID" value="QGJ84180.1"/>
    <property type="status" value="ALT_INIT"/>
    <property type="molecule type" value="Genomic_DNA"/>
</dbReference>
<dbReference type="RefSeq" id="WP_001617865.1">
    <property type="nucleotide sequence ID" value="NZ_WWEL01000051.1"/>
</dbReference>
<dbReference type="RefSeq" id="YP_003864338.1">
    <property type="nucleotide sequence ID" value="NC_014477.1"/>
</dbReference>
<dbReference type="RefSeq" id="YP_004870005.1">
    <property type="nucleotide sequence ID" value="NC_016039.1"/>
</dbReference>
<dbReference type="RefSeq" id="YP_006952191.1">
    <property type="nucleotide sequence ID" value="NC_019057.1"/>
</dbReference>
<dbReference type="RefSeq" id="YP_006953274.1">
    <property type="nucleotide sequence ID" value="NC_019071.1"/>
</dbReference>
<dbReference type="RefSeq" id="YP_006953372.1">
    <property type="nucleotide sequence ID" value="NC_019072.1"/>
</dbReference>
<dbReference type="RefSeq" id="YP_007349502.1">
    <property type="nucleotide sequence ID" value="NC_020086.1"/>
</dbReference>
<dbReference type="RefSeq" id="YP_008439340.1">
    <property type="nucleotide sequence ID" value="NC_022105.1"/>
</dbReference>
<dbReference type="RefSeq" id="YP_009069602.1">
    <property type="nucleotide sequence ID" value="NC_025147.1"/>
</dbReference>
<dbReference type="PDB" id="8SJ3">
    <property type="method" value="X-ray"/>
    <property type="resolution" value="1.50 A"/>
    <property type="chains" value="A/B=29-291"/>
</dbReference>
<dbReference type="PDBsum" id="8SJ3"/>
<dbReference type="SMR" id="A0A649V088"/>
<dbReference type="CARD" id="ARO:3001877">
    <property type="molecule name" value="CTX-M-14"/>
    <property type="mechanism identifier" value="ARO:0001004"/>
    <property type="mechanism name" value="antibiotic inactivation"/>
</dbReference>
<dbReference type="GO" id="GO:0005576">
    <property type="term" value="C:extracellular region"/>
    <property type="evidence" value="ECO:0007669"/>
    <property type="project" value="UniProtKB-SubCell"/>
</dbReference>
<dbReference type="GO" id="GO:0008800">
    <property type="term" value="F:beta-lactamase activity"/>
    <property type="evidence" value="ECO:0007669"/>
    <property type="project" value="UniProtKB-EC"/>
</dbReference>
<dbReference type="GO" id="GO:0030655">
    <property type="term" value="P:beta-lactam antibiotic catabolic process"/>
    <property type="evidence" value="ECO:0007669"/>
    <property type="project" value="InterPro"/>
</dbReference>
<dbReference type="GO" id="GO:0046677">
    <property type="term" value="P:response to antibiotic"/>
    <property type="evidence" value="ECO:0007669"/>
    <property type="project" value="UniProtKB-KW"/>
</dbReference>
<dbReference type="Gene3D" id="3.40.710.10">
    <property type="entry name" value="DD-peptidase/beta-lactamase superfamily"/>
    <property type="match status" value="1"/>
</dbReference>
<dbReference type="InterPro" id="IPR012338">
    <property type="entry name" value="Beta-lactam/transpept-like"/>
</dbReference>
<dbReference type="InterPro" id="IPR045155">
    <property type="entry name" value="Beta-lactam_cat"/>
</dbReference>
<dbReference type="InterPro" id="IPR000871">
    <property type="entry name" value="Beta-lactam_class-A"/>
</dbReference>
<dbReference type="InterPro" id="IPR023650">
    <property type="entry name" value="Beta-lactam_class-A_AS"/>
</dbReference>
<dbReference type="NCBIfam" id="NF033103">
    <property type="entry name" value="bla_class_A"/>
    <property type="match status" value="1"/>
</dbReference>
<dbReference type="NCBIfam" id="NF033089">
    <property type="entry name" value="blaCTX-M"/>
    <property type="match status" value="1"/>
</dbReference>
<dbReference type="PANTHER" id="PTHR35333">
    <property type="entry name" value="BETA-LACTAMASE"/>
    <property type="match status" value="1"/>
</dbReference>
<dbReference type="PANTHER" id="PTHR35333:SF3">
    <property type="entry name" value="BETA-LACTAMASE-TYPE TRANSPEPTIDASE FOLD CONTAINING PROTEIN"/>
    <property type="match status" value="1"/>
</dbReference>
<dbReference type="Pfam" id="PF13354">
    <property type="entry name" value="Beta-lactamase2"/>
    <property type="match status" value="1"/>
</dbReference>
<dbReference type="PRINTS" id="PR00118">
    <property type="entry name" value="BLACTAMASEA"/>
</dbReference>
<dbReference type="SUPFAM" id="SSF56601">
    <property type="entry name" value="beta-lactamase/transpeptidase-like"/>
    <property type="match status" value="1"/>
</dbReference>
<dbReference type="PROSITE" id="PS00146">
    <property type="entry name" value="BETA_LACTAMASE_A"/>
    <property type="match status" value="1"/>
</dbReference>
<evidence type="ECO:0000250" key="1">
    <source>
        <dbReference type="UniProtKB" id="A0A5R8T042"/>
    </source>
</evidence>
<evidence type="ECO:0000250" key="2">
    <source>
        <dbReference type="UniProtKB" id="P9WKD3"/>
    </source>
</evidence>
<evidence type="ECO:0000255" key="3"/>
<evidence type="ECO:0000255" key="4">
    <source>
        <dbReference type="PROSITE-ProRule" id="PRU10101"/>
    </source>
</evidence>
<evidence type="ECO:0000269" key="5">
    <source>
    </source>
</evidence>
<evidence type="ECO:0000269" key="6">
    <source>
    </source>
</evidence>
<evidence type="ECO:0000269" key="7">
    <source>
    </source>
</evidence>
<evidence type="ECO:0000303" key="8">
    <source>
    </source>
</evidence>
<evidence type="ECO:0000305" key="9"/>
<evidence type="ECO:0000305" key="10">
    <source>
    </source>
</evidence>
<evidence type="ECO:0000312" key="11">
    <source>
        <dbReference type="EMBL" id="QGJ84179.1"/>
    </source>
</evidence>
<evidence type="ECO:0000312" key="12">
    <source>
        <dbReference type="EMBL" id="QGJ84180.1"/>
    </source>
</evidence>
<evidence type="ECO:0007829" key="13">
    <source>
        <dbReference type="PDB" id="8SJ3"/>
    </source>
</evidence>
<sequence>MVTKRVQRMMFAAAACIPLLLGSAPLYAQTSAVQQKLAALEKSSGGRLGVALIDTADNTQVLYRGDERFPMCSTSKVMAAAAVLKQSETQKQLLNQPVEIKPADLVNYNPIAEKHVNGTMTLAELSAAALQYSDNTAMNKLIAQLGGPGGVTAFARAIGDETFRLDRTEPTLNTAIPGDPRDTTTPRAMAQTLRQLTLGHALGETQRAQLVTWLKGNTTGAASIRAGLPTSWTVGDKTGSGDYGTTNDIAVIWPQGRAPLVLVTYFTQPQQNAESRRDVLASAARIIAEGL</sequence>
<reference evidence="12" key="1">
    <citation type="submission" date="2019-08" db="EMBL/GenBank/DDBJ databases">
        <title>CTX-M beta lactamase from working population of beaches.</title>
        <authorList>
            <person name="Long W."/>
        </authorList>
    </citation>
    <scope>NUCLEOTIDE SEQUENCE [GENOMIC DNA]</scope>
    <source>
        <strain evidence="11">WZZ275</strain>
        <strain evidence="12">WZZ283</strain>
    </source>
</reference>
<reference evidence="9" key="2">
    <citation type="journal article" date="1991" name="Biochem. J.">
        <title>A standard numbering scheme for the class A beta-lactamases.</title>
        <authorList>
            <person name="Ambler R.P."/>
            <person name="Coulson A.F."/>
            <person name="Frere J.M."/>
            <person name="Ghuysen J.M."/>
            <person name="Joris B."/>
            <person name="Forsman M."/>
            <person name="Levesque R.C."/>
            <person name="Tiraby G."/>
            <person name="Waley S.G."/>
        </authorList>
    </citation>
    <scope>NOMENCLATURE</scope>
</reference>
<reference evidence="9" key="3">
    <citation type="journal article" date="2015" name="Antimicrob. Agents Chemother.">
        <title>Residues Distal to the Active Site Contribute to Enhanced Catalytic Activity of Variant and Hybrid beta-Lactamases Derived from CTX-M-14 and CTX-M-15.</title>
        <authorList>
            <person name="He D."/>
            <person name="Chiou J."/>
            <person name="Zeng Z."/>
            <person name="Liu L."/>
            <person name="Chen X."/>
            <person name="Zeng L."/>
            <person name="Chan E.W."/>
            <person name="Liu J.H."/>
            <person name="Chen S."/>
        </authorList>
    </citation>
    <scope>FUNCTION</scope>
    <scope>CATALYTIC ACTIVITY</scope>
    <scope>ACTIVITY REGULATION</scope>
    <scope>BIOPHYSICOCHEMICAL PROPERTIES</scope>
    <scope>MUTAGENESIS OF ASP-242</scope>
</reference>
<reference evidence="9" key="4">
    <citation type="journal article" date="2015" name="Antimicrob. Agents Chemother.">
        <title>Characterization of the global stabilizing substitution A77V and its role in the evolution of CTX-M beta-lactamases.</title>
        <authorList>
            <person name="Patel M.P."/>
            <person name="Fryszczyn B.G."/>
            <person name="Palzkill T."/>
        </authorList>
    </citation>
    <scope>FUNCTION</scope>
    <scope>CATALYTIC ACTIVITY</scope>
    <scope>BIOPHYSICOCHEMICAL PROPERTIES</scope>
    <scope>MUTAGENESIS OF ALA-80; PRO-170 AND ASP-242</scope>
</reference>
<protein>
    <recommendedName>
        <fullName evidence="8">Beta-lactamase CTX-M-14</fullName>
        <ecNumber evidence="6 7">3.5.2.6</ecNumber>
    </recommendedName>
    <alternativeName>
        <fullName evidence="10">Cefotaximase 14</fullName>
    </alternativeName>
</protein>
<comment type="function">
    <text evidence="6 7">Extended-spectrum beta-lactamase (ESBL) which confers resistance to penicillins, as well as first, second, and third-generation cephalosporins (PubMed:26169409, PubMed:26282414). Has cefotaxime-hydrolyzing activity (PubMed:26282414).</text>
</comment>
<comment type="catalytic activity">
    <reaction evidence="6 7">
        <text>a beta-lactam + H2O = a substituted beta-amino acid</text>
        <dbReference type="Rhea" id="RHEA:20401"/>
        <dbReference type="ChEBI" id="CHEBI:15377"/>
        <dbReference type="ChEBI" id="CHEBI:35627"/>
        <dbReference type="ChEBI" id="CHEBI:140347"/>
        <dbReference type="EC" id="3.5.2.6"/>
    </reaction>
</comment>
<comment type="activity regulation">
    <text evidence="6">Inhibited by the beta-lactamase-blocking agents clavulanic acid, tazobactam and sulbactam.</text>
</comment>
<comment type="biophysicochemical properties">
    <kinetics>
        <KM evidence="6">72 uM for ampicillin (at pH 7.0 and 25 degrees Celsius)</KM>
        <KM evidence="7">12 uM for ampicillin (at pH 7.0 and 30 degrees Celsius)</KM>
        <KM evidence="6">64 uM for cefalotin (at pH 7.0 and 25 degrees Celsius)</KM>
        <KM evidence="7">93 uM for cefalotin (at pH 7.0 and 30 degrees Celsius)</KM>
        <KM evidence="6">22 uM for cefuroxime (at pH 7.0 and 25 degrees Celsius)</KM>
        <KM evidence="6">34 uM for cefotaxime (at pH 7.0 and 25 degrees Celsius)</KM>
        <KM evidence="7">72 uM for cefotaxime (at pH 7.0 and 30 degrees Celsius)</KM>
        <KM evidence="6">11 uM for nitrocefin (at pH 7.0 and 25 degrees Celsius)</KM>
        <KM evidence="7">22 uM for nitrocefin (at pH 7.0 and 30 degrees Celsius)</KM>
        <KM evidence="6">14 uM for ceftiofur (at pH 7.0 and 25 degrees Celsius)</KM>
        <KM evidence="6">17 uM for ceftriaxone (at pH 7.0 and 25 degrees Celsius)</KM>
        <text evidence="6 7">kcat is 25 sec(-1) with ampicillin as substrate (at pH 7.0 and 25 degrees Celsius) (PubMed:26169409). kcat is 140 sec(-1) with ampicillin as substrate (at pH 7.0 and 30 degrees Celsius) (PubMed:26282414). kcat is 357 sec(-1) with cefalotin as substrate (at pH 7.0 and 25 degrees Celsius) (PubMed:26169409). kcat is 1626 sec(-1) with cefalotin as substrate (at pH 7.0 and 30 degrees Celsius) (PubMed:26282414). kcat is 37 sec(-1) with cefotaxime as substrate (at pH 7.0 and 25 degrees Celsius) (PubMed:26169409). kcat is 203 sec(-1) with cefotaxime as substrate (at pH 7.0 and 30 degrees Celsius) (PubMed:26282414). kcat is 114 sec(-1) with nitrocefin as substrate (at pH 7.0 and 25 degrees Celsius) (PubMed:26169409). kcat is 304 sec(-1) with nitrocefin as substrate (at pH 7.0 and 30 degrees Celsius) (PubMed:26282414). kcat is 22 sec(-1) with cefuroxime as substrate (at pH 7.0 and 25 degrees Celsius) (PubMed:26169409). kcat is 16 sec(-1) with ceftiofur as substrate (at pH 7.0 and 25 degrees Celsius) (PubMed:26169409). kcat is 42 sec(-1) with ceftriaxone as substrate (at pH 7.0 and 25 degrees Celsius) (PubMed:26169409).</text>
    </kinetics>
</comment>
<comment type="subunit">
    <text evidence="2">Monomer.</text>
</comment>
<comment type="subcellular location">
    <subcellularLocation>
        <location evidence="1">Secreted</location>
    </subcellularLocation>
</comment>
<comment type="miscellaneous">
    <text evidence="5">The class A beta-lactamase family has a specific amino-acid numbering system, sometimes called Ambler or ABL numbering and often misspelt as Amber (PubMed:2039479). A multiple sequence alignment was used to derive a consensus sequence and then the consensus was numbered taking into account insertions and deletions (PubMed:2039479). This allows use of identical numbers, e.g. for active site residues, despite differences in protein length (PubMed:2039479). UniProt always uses natural numbering of residues, hence there appear to be differences in numbering between this entry and some papers (PubMed:2039479).</text>
</comment>
<comment type="similarity">
    <text evidence="9">Belongs to the class-A beta-lactamase family.</text>
</comment>
<comment type="sequence caution" evidence="9">
    <conflict type="erroneous initiation">
        <sequence resource="EMBL-CDS" id="QGJ84179"/>
    </conflict>
    <text>Extended N-terminus.</text>
</comment>
<comment type="sequence caution" evidence="9">
    <conflict type="erroneous initiation">
        <sequence resource="EMBL-CDS" id="QGJ84180"/>
    </conflict>
    <text>Extended N-terminus.</text>
</comment>
<proteinExistence type="evidence at protein level"/>
<gene>
    <name evidence="8" type="primary">bla</name>
    <name evidence="12" type="synonym">blaCTX-M</name>
    <name evidence="8" type="synonym">blaCTX-M-14</name>
</gene>
<name>BLC14_ECOLX</name>
<organism evidence="12">
    <name type="scientific">Escherichia coli</name>
    <dbReference type="NCBI Taxonomy" id="562"/>
    <lineage>
        <taxon>Bacteria</taxon>
        <taxon>Pseudomonadati</taxon>
        <taxon>Pseudomonadota</taxon>
        <taxon>Gammaproteobacteria</taxon>
        <taxon>Enterobacterales</taxon>
        <taxon>Enterobacteriaceae</taxon>
        <taxon>Escherichia</taxon>
    </lineage>
</organism>
<keyword id="KW-0002">3D-structure</keyword>
<keyword id="KW-0046">Antibiotic resistance</keyword>
<keyword id="KW-0378">Hydrolase</keyword>
<keyword id="KW-0964">Secreted</keyword>
<keyword id="KW-0732">Signal</keyword>
<feature type="signal peptide" evidence="3">
    <location>
        <begin position="1"/>
        <end position="28"/>
    </location>
</feature>
<feature type="chain" id="PRO_5033512764" description="Beta-lactamase CTX-M-14" evidence="3">
    <location>
        <begin position="29"/>
        <end position="291"/>
    </location>
</feature>
<feature type="active site" description="Nucleophile; acyl-ester intermediate" evidence="1 4">
    <location>
        <position position="73"/>
    </location>
</feature>
<feature type="binding site" evidence="1">
    <location>
        <position position="76"/>
    </location>
    <ligand>
        <name>a beta-lactam</name>
        <dbReference type="ChEBI" id="CHEBI:35627"/>
    </ligand>
</feature>
<feature type="binding site" evidence="1">
    <location>
        <position position="133"/>
    </location>
    <ligand>
        <name>a beta-lactam</name>
        <dbReference type="ChEBI" id="CHEBI:35627"/>
    </ligand>
</feature>
<feature type="binding site" evidence="1">
    <location>
        <position position="169"/>
    </location>
    <ligand>
        <name>a beta-lactam</name>
        <dbReference type="ChEBI" id="CHEBI:35627"/>
    </ligand>
</feature>
<feature type="binding site" evidence="1">
    <location>
        <position position="240"/>
    </location>
    <ligand>
        <name>a beta-lactam</name>
        <dbReference type="ChEBI" id="CHEBI:35627"/>
    </ligand>
</feature>
<feature type="mutagenesis site" description="Slightly reduces resistance to cefalotin in RB791 strain, but has little effect on resistance to ampicillin, cefotaxime or ceftazidime. Very little effect on catalytic efficiency. Increases steady-state expression level in RB791 strain. Increases catalytic efficiency with respect to ceftazidime; when associated with S-170. Increases resistance to ceftazidime slightly further, and also increases resistance to cefotaxime, in RB791 strain; when associated with S-170. Increases catalytic efficiency with respect to ceftazidime; when associated with G-242. Increases resistance to ceftazidime slightly further, and also increases resistance to cefotaxime, in RB791 strain; when associated with G-242." evidence="7">
    <original>A</original>
    <variation>V</variation>
    <location>
        <position position="80"/>
    </location>
</feature>
<feature type="mutagenesis site" description="Increases catalytic efficiency with respect to ceftazidime. Increases resistance to ceftazidime, but reduces resistance to cefotaxime, in RB791 strain. Increases catalytic efficiency with respect to ceftazidime; when associated with V-80. Increases resistance to ceftazidime slightly further, and also increases resistance to cefotaxime, in RB791 strain; when associated with V-80." evidence="7">
    <original>P</original>
    <variation>S</variation>
    <location>
        <position position="170"/>
    </location>
</feature>
<feature type="mutagenesis site" description="Increases catalytic efficiency with respect to ceftazidime. Slightly increases catalytic efficiency with respect to ampicillin and nitrocefin. Increases resistance to ceftazidime, but reduces resistance to cefotaxime, in RB791 strain. Increases catalytic efficiency with respect to ceftazidime; when associated with V-80. Increases resistance to ceftazidime slightly further, and also increases resistance to cefotaxime, in RB791 strain; when associated with V-80." evidence="6 7">
    <original>D</original>
    <variation>G</variation>
    <location>
        <position position="242"/>
    </location>
</feature>
<feature type="helix" evidence="13">
    <location>
        <begin position="32"/>
        <end position="43"/>
    </location>
</feature>
<feature type="strand" evidence="13">
    <location>
        <begin position="46"/>
        <end position="54"/>
    </location>
</feature>
<feature type="turn" evidence="13">
    <location>
        <begin position="55"/>
        <end position="58"/>
    </location>
</feature>
<feature type="strand" evidence="13">
    <location>
        <begin position="59"/>
        <end position="64"/>
    </location>
</feature>
<feature type="helix" evidence="13">
    <location>
        <begin position="72"/>
        <end position="75"/>
    </location>
</feature>
<feature type="helix" evidence="13">
    <location>
        <begin position="76"/>
        <end position="87"/>
    </location>
</feature>
<feature type="helix" evidence="13">
    <location>
        <begin position="93"/>
        <end position="95"/>
    </location>
</feature>
<feature type="strand" evidence="13">
    <location>
        <begin position="96"/>
        <end position="100"/>
    </location>
</feature>
<feature type="helix" evidence="13">
    <location>
        <begin position="102"/>
        <end position="104"/>
    </location>
</feature>
<feature type="helix" evidence="13">
    <location>
        <begin position="112"/>
        <end position="115"/>
    </location>
</feature>
<feature type="strand" evidence="13">
    <location>
        <begin position="118"/>
        <end position="121"/>
    </location>
</feature>
<feature type="helix" evidence="13">
    <location>
        <begin position="122"/>
        <end position="131"/>
    </location>
</feature>
<feature type="helix" evidence="13">
    <location>
        <begin position="135"/>
        <end position="144"/>
    </location>
</feature>
<feature type="helix" evidence="13">
    <location>
        <begin position="148"/>
        <end position="157"/>
    </location>
</feature>
<feature type="helix" evidence="13">
    <location>
        <begin position="171"/>
        <end position="173"/>
    </location>
</feature>
<feature type="helix" evidence="13">
    <location>
        <begin position="186"/>
        <end position="197"/>
    </location>
</feature>
<feature type="strand" evidence="13">
    <location>
        <begin position="199"/>
        <end position="202"/>
    </location>
</feature>
<feature type="helix" evidence="13">
    <location>
        <begin position="204"/>
        <end position="215"/>
    </location>
</feature>
<feature type="turn" evidence="13">
    <location>
        <begin position="221"/>
        <end position="223"/>
    </location>
</feature>
<feature type="helix" evidence="13">
    <location>
        <begin position="224"/>
        <end position="227"/>
    </location>
</feature>
<feature type="strand" evidence="13">
    <location>
        <begin position="232"/>
        <end position="241"/>
    </location>
</feature>
<feature type="turn" evidence="13">
    <location>
        <begin position="242"/>
        <end position="244"/>
    </location>
</feature>
<feature type="strand" evidence="13">
    <location>
        <begin position="245"/>
        <end position="253"/>
    </location>
</feature>
<feature type="strand" evidence="13">
    <location>
        <begin position="260"/>
        <end position="267"/>
    </location>
</feature>
<feature type="helix" evidence="13">
    <location>
        <begin position="277"/>
        <end position="290"/>
    </location>
</feature>
<accession>A0A649V088</accession>